<proteinExistence type="inferred from homology"/>
<organism>
    <name type="scientific">Staphylococcus aureus (strain MW2)</name>
    <dbReference type="NCBI Taxonomy" id="196620"/>
    <lineage>
        <taxon>Bacteria</taxon>
        <taxon>Bacillati</taxon>
        <taxon>Bacillota</taxon>
        <taxon>Bacilli</taxon>
        <taxon>Bacillales</taxon>
        <taxon>Staphylococcaceae</taxon>
        <taxon>Staphylococcus</taxon>
    </lineage>
</organism>
<name>NRDI_STAAW</name>
<gene>
    <name type="primary">nrdI</name>
    <name type="ordered locus">MW0692</name>
</gene>
<feature type="chain" id="PRO_0000164340" description="Protein NrdI">
    <location>
        <begin position="1"/>
        <end position="132"/>
    </location>
</feature>
<protein>
    <recommendedName>
        <fullName>Protein NrdI</fullName>
    </recommendedName>
</protein>
<evidence type="ECO:0000250" key="1"/>
<evidence type="ECO:0000305" key="2"/>
<reference key="1">
    <citation type="journal article" date="2002" name="Lancet">
        <title>Genome and virulence determinants of high virulence community-acquired MRSA.</title>
        <authorList>
            <person name="Baba T."/>
            <person name="Takeuchi F."/>
            <person name="Kuroda M."/>
            <person name="Yuzawa H."/>
            <person name="Aoki K."/>
            <person name="Oguchi A."/>
            <person name="Nagai Y."/>
            <person name="Iwama N."/>
            <person name="Asano K."/>
            <person name="Naimi T."/>
            <person name="Kuroda H."/>
            <person name="Cui L."/>
            <person name="Yamamoto K."/>
            <person name="Hiramatsu K."/>
        </authorList>
    </citation>
    <scope>NUCLEOTIDE SEQUENCE [LARGE SCALE GENOMIC DNA]</scope>
    <source>
        <strain>MW2</strain>
    </source>
</reference>
<dbReference type="EMBL" id="BA000033">
    <property type="protein sequence ID" value="BAB94557.1"/>
    <property type="molecule type" value="Genomic_DNA"/>
</dbReference>
<dbReference type="RefSeq" id="WP_000692521.1">
    <property type="nucleotide sequence ID" value="NC_003923.1"/>
</dbReference>
<dbReference type="SMR" id="P68814"/>
<dbReference type="KEGG" id="sam:MW0692"/>
<dbReference type="HOGENOM" id="CLU_114845_3_0_9"/>
<dbReference type="GO" id="GO:0010181">
    <property type="term" value="F:FMN binding"/>
    <property type="evidence" value="ECO:0007669"/>
    <property type="project" value="InterPro"/>
</dbReference>
<dbReference type="GO" id="GO:0036211">
    <property type="term" value="P:protein modification process"/>
    <property type="evidence" value="ECO:0007669"/>
    <property type="project" value="InterPro"/>
</dbReference>
<dbReference type="Gene3D" id="3.40.50.360">
    <property type="match status" value="1"/>
</dbReference>
<dbReference type="HAMAP" id="MF_00128">
    <property type="entry name" value="NrdI"/>
    <property type="match status" value="1"/>
</dbReference>
<dbReference type="InterPro" id="IPR029039">
    <property type="entry name" value="Flavoprotein-like_sf"/>
</dbReference>
<dbReference type="InterPro" id="IPR020852">
    <property type="entry name" value="RNR_Ib_NrdI_bac"/>
</dbReference>
<dbReference type="InterPro" id="IPR004465">
    <property type="entry name" value="RNR_NrdI"/>
</dbReference>
<dbReference type="NCBIfam" id="TIGR00333">
    <property type="entry name" value="nrdI"/>
    <property type="match status" value="1"/>
</dbReference>
<dbReference type="PANTHER" id="PTHR37297">
    <property type="entry name" value="PROTEIN NRDI"/>
    <property type="match status" value="1"/>
</dbReference>
<dbReference type="PANTHER" id="PTHR37297:SF1">
    <property type="entry name" value="PROTEIN NRDI"/>
    <property type="match status" value="1"/>
</dbReference>
<dbReference type="Pfam" id="PF07972">
    <property type="entry name" value="Flavodoxin_NdrI"/>
    <property type="match status" value="1"/>
</dbReference>
<dbReference type="PIRSF" id="PIRSF005087">
    <property type="entry name" value="NrdI"/>
    <property type="match status" value="1"/>
</dbReference>
<dbReference type="SUPFAM" id="SSF52218">
    <property type="entry name" value="Flavoproteins"/>
    <property type="match status" value="1"/>
</dbReference>
<sequence>MKIIYFSFTGNVRRFIKRTELENTLEITAENCMEPVHEPFIIVTGTIGFGEVPEPVQSFLEVNHQYIRGVAASGNRNWGLNFAKAGRTISEEYNVPLLMKFELHGKNKDVIEFKNKVGNFNENHGREKVQSY</sequence>
<comment type="function">
    <text evidence="1">Probably involved in ribonucleotide reductase function.</text>
</comment>
<comment type="similarity">
    <text evidence="2">Belongs to the NrdI family.</text>
</comment>
<accession>P68814</accession>
<accession>Q99VP3</accession>
<accession>Q9Z5C9</accession>